<keyword id="KW-0496">Mitochondrion</keyword>
<keyword id="KW-0687">Ribonucleoprotein</keyword>
<keyword id="KW-0689">Ribosomal protein</keyword>
<comment type="subcellular location">
    <subcellularLocation>
        <location>Mitochondrion</location>
    </subcellularLocation>
</comment>
<comment type="similarity">
    <text evidence="1">Belongs to the bacterial ribosomal protein bL19 family.</text>
</comment>
<evidence type="ECO:0000305" key="1"/>
<protein>
    <recommendedName>
        <fullName evidence="1">Large ribosomal subunit protein bL19m</fullName>
    </recommendedName>
    <alternativeName>
        <fullName>60S ribosomal protein L19, mitochondrial</fullName>
    </alternativeName>
</protein>
<gene>
    <name type="primary">RPL19</name>
</gene>
<feature type="chain" id="PRO_0000163590" description="Large ribosomal subunit protein bL19m">
    <location>
        <begin position="1"/>
        <end position="113"/>
    </location>
</feature>
<organism>
    <name type="scientific">Reclinomonas americana</name>
    <dbReference type="NCBI Taxonomy" id="48483"/>
    <lineage>
        <taxon>Eukaryota</taxon>
        <taxon>Discoba</taxon>
        <taxon>Jakobida</taxon>
        <taxon>Histionina</taxon>
        <taxon>Histionidae</taxon>
        <taxon>Reclinomonas</taxon>
    </lineage>
</organism>
<geneLocation type="mitochondrion"/>
<name>RM19_RECAM</name>
<sequence length="113" mass="12938">MLNLIQTLRMEATQKSRHKKTQIQSGDILSITTTQYKNKKRKQNLKGICIGIKKRIGYTTIQLRNFIGGVSQEQSFILESPIINNIEIIGKIKGNTKAKKYYLRTKSPSENKV</sequence>
<reference key="1">
    <citation type="journal article" date="1997" name="Nature">
        <title>An ancestral mitochondrial DNA resembling a eubacterial genome in miniature.</title>
        <authorList>
            <person name="Lang B.F."/>
            <person name="Burger G."/>
            <person name="O'Kelly C.J."/>
            <person name="Cedergren R."/>
            <person name="Golding G.B."/>
            <person name="Lemieux C."/>
            <person name="Sankoff D."/>
            <person name="Turmel M."/>
            <person name="Gray M.W."/>
        </authorList>
    </citation>
    <scope>NUCLEOTIDE SEQUENCE [GENOMIC DNA]</scope>
    <source>
        <strain>ATCC 50394</strain>
    </source>
</reference>
<accession>O21264</accession>
<dbReference type="EMBL" id="AF007261">
    <property type="protein sequence ID" value="AAD11891.1"/>
    <property type="molecule type" value="Genomic_DNA"/>
</dbReference>
<dbReference type="PIR" id="S78158">
    <property type="entry name" value="S78158"/>
</dbReference>
<dbReference type="RefSeq" id="NP_044776.1">
    <property type="nucleotide sequence ID" value="NC_001823.1"/>
</dbReference>
<dbReference type="SMR" id="O21264"/>
<dbReference type="GeneID" id="801108"/>
<dbReference type="GO" id="GO:0005762">
    <property type="term" value="C:mitochondrial large ribosomal subunit"/>
    <property type="evidence" value="ECO:0007669"/>
    <property type="project" value="TreeGrafter"/>
</dbReference>
<dbReference type="GO" id="GO:0003735">
    <property type="term" value="F:structural constituent of ribosome"/>
    <property type="evidence" value="ECO:0007669"/>
    <property type="project" value="InterPro"/>
</dbReference>
<dbReference type="GO" id="GO:0006412">
    <property type="term" value="P:translation"/>
    <property type="evidence" value="ECO:0007669"/>
    <property type="project" value="InterPro"/>
</dbReference>
<dbReference type="Gene3D" id="2.30.30.790">
    <property type="match status" value="1"/>
</dbReference>
<dbReference type="InterPro" id="IPR001857">
    <property type="entry name" value="Ribosomal_bL19"/>
</dbReference>
<dbReference type="InterPro" id="IPR018257">
    <property type="entry name" value="Ribosomal_bL19_CS"/>
</dbReference>
<dbReference type="InterPro" id="IPR038657">
    <property type="entry name" value="Ribosomal_bL19_sf"/>
</dbReference>
<dbReference type="InterPro" id="IPR008991">
    <property type="entry name" value="Translation_prot_SH3-like_sf"/>
</dbReference>
<dbReference type="PANTHER" id="PTHR15680:SF9">
    <property type="entry name" value="LARGE RIBOSOMAL SUBUNIT PROTEIN BL19M"/>
    <property type="match status" value="1"/>
</dbReference>
<dbReference type="PANTHER" id="PTHR15680">
    <property type="entry name" value="RIBOSOMAL PROTEIN L19"/>
    <property type="match status" value="1"/>
</dbReference>
<dbReference type="Pfam" id="PF01245">
    <property type="entry name" value="Ribosomal_L19"/>
    <property type="match status" value="1"/>
</dbReference>
<dbReference type="SUPFAM" id="SSF50104">
    <property type="entry name" value="Translation proteins SH3-like domain"/>
    <property type="match status" value="1"/>
</dbReference>
<dbReference type="PROSITE" id="PS01015">
    <property type="entry name" value="RIBOSOMAL_L19"/>
    <property type="match status" value="1"/>
</dbReference>
<proteinExistence type="inferred from homology"/>